<reference key="1">
    <citation type="journal article" date="2007" name="J. Bacteriol.">
        <title>Complete genome sequence of Haemophilus somnus (Histophilus somni) strain 129Pt and comparison to Haemophilus ducreyi 35000HP and Haemophilus influenzae Rd.</title>
        <authorList>
            <person name="Challacombe J.F."/>
            <person name="Duncan A.J."/>
            <person name="Brettin T.S."/>
            <person name="Bruce D."/>
            <person name="Chertkov O."/>
            <person name="Detter J.C."/>
            <person name="Han C.S."/>
            <person name="Misra M."/>
            <person name="Richardson P."/>
            <person name="Tapia R."/>
            <person name="Thayer N."/>
            <person name="Xie G."/>
            <person name="Inzana T.J."/>
        </authorList>
    </citation>
    <scope>NUCLEOTIDE SEQUENCE [LARGE SCALE GENOMIC DNA]</scope>
    <source>
        <strain>129Pt</strain>
    </source>
</reference>
<name>ZNUC_HISS1</name>
<keyword id="KW-0067">ATP-binding</keyword>
<keyword id="KW-0997">Cell inner membrane</keyword>
<keyword id="KW-1003">Cell membrane</keyword>
<keyword id="KW-0406">Ion transport</keyword>
<keyword id="KW-0472">Membrane</keyword>
<keyword id="KW-0547">Nucleotide-binding</keyword>
<keyword id="KW-1278">Translocase</keyword>
<keyword id="KW-0813">Transport</keyword>
<keyword id="KW-0862">Zinc</keyword>
<keyword id="KW-0864">Zinc transport</keyword>
<feature type="chain" id="PRO_0000281510" description="Zinc import ATP-binding protein ZnuC">
    <location>
        <begin position="1"/>
        <end position="264"/>
    </location>
</feature>
<feature type="domain" description="ABC transporter" evidence="1">
    <location>
        <begin position="11"/>
        <end position="226"/>
    </location>
</feature>
<feature type="binding site" evidence="1">
    <location>
        <begin position="43"/>
        <end position="50"/>
    </location>
    <ligand>
        <name>ATP</name>
        <dbReference type="ChEBI" id="CHEBI:30616"/>
    </ligand>
</feature>
<comment type="function">
    <text evidence="1">Part of the ABC transporter complex ZnuABC involved in zinc import. Responsible for energy coupling to the transport system.</text>
</comment>
<comment type="catalytic activity">
    <reaction evidence="1">
        <text>Zn(2+)(out) + ATP(in) + H2O(in) = Zn(2+)(in) + ADP(in) + phosphate(in) + H(+)(in)</text>
        <dbReference type="Rhea" id="RHEA:29795"/>
        <dbReference type="ChEBI" id="CHEBI:15377"/>
        <dbReference type="ChEBI" id="CHEBI:15378"/>
        <dbReference type="ChEBI" id="CHEBI:29105"/>
        <dbReference type="ChEBI" id="CHEBI:30616"/>
        <dbReference type="ChEBI" id="CHEBI:43474"/>
        <dbReference type="ChEBI" id="CHEBI:456216"/>
        <dbReference type="EC" id="7.2.2.20"/>
    </reaction>
</comment>
<comment type="subunit">
    <text evidence="1">The complex is composed of two ATP-binding proteins (ZnuC), two transmembrane proteins (ZnuB) and a solute-binding protein (ZnuA).</text>
</comment>
<comment type="subcellular location">
    <subcellularLocation>
        <location evidence="1">Cell inner membrane</location>
        <topology evidence="1">Peripheral membrane protein</topology>
    </subcellularLocation>
</comment>
<comment type="similarity">
    <text evidence="1">Belongs to the ABC transporter superfamily. Zinc importer (TC 3.A.1.15.5) family.</text>
</comment>
<evidence type="ECO:0000255" key="1">
    <source>
        <dbReference type="HAMAP-Rule" id="MF_01725"/>
    </source>
</evidence>
<protein>
    <recommendedName>
        <fullName evidence="1">Zinc import ATP-binding protein ZnuC</fullName>
        <ecNumber evidence="1">7.2.2.20</ecNumber>
    </recommendedName>
</protein>
<gene>
    <name evidence="1" type="primary">znuC</name>
    <name type="ordered locus">HS_1037</name>
</gene>
<sequence>MQIHSLKYPLIELKGVNVTFAQKTILSDINLTIYPNSIMTIVGPNGGGKSTLLKVLLKLLPATSGKVIYSKNVVIGYVPQNIYLDKSLPITVEKFLSLRKGTHKQDIKDALTLLSIGHLRLNAMQKLSGGEMQRVLLARAILNKPNLLVLDEPTQGVDITGQAELYQLIKQTQQQLNCAILMVSHDLHLVMADTNEVLCVNQHICCAGSPEAVSNDPVFIRFFGNQFAKNIAFYTHHHNHKHNIHGDICCGQDFRSTQCKHKIN</sequence>
<accession>Q0I4A9</accession>
<proteinExistence type="inferred from homology"/>
<dbReference type="EC" id="7.2.2.20" evidence="1"/>
<dbReference type="EMBL" id="CP000436">
    <property type="protein sequence ID" value="ABI25312.1"/>
    <property type="molecule type" value="Genomic_DNA"/>
</dbReference>
<dbReference type="SMR" id="Q0I4A9"/>
<dbReference type="KEGG" id="hso:HS_1037"/>
<dbReference type="eggNOG" id="COG1121">
    <property type="taxonomic scope" value="Bacteria"/>
</dbReference>
<dbReference type="HOGENOM" id="CLU_000604_1_11_6"/>
<dbReference type="GO" id="GO:0005886">
    <property type="term" value="C:plasma membrane"/>
    <property type="evidence" value="ECO:0007669"/>
    <property type="project" value="UniProtKB-SubCell"/>
</dbReference>
<dbReference type="GO" id="GO:0015633">
    <property type="term" value="F:ABC-type zinc transporter activity"/>
    <property type="evidence" value="ECO:0007669"/>
    <property type="project" value="UniProtKB-EC"/>
</dbReference>
<dbReference type="GO" id="GO:0005524">
    <property type="term" value="F:ATP binding"/>
    <property type="evidence" value="ECO:0007669"/>
    <property type="project" value="UniProtKB-KW"/>
</dbReference>
<dbReference type="GO" id="GO:0016887">
    <property type="term" value="F:ATP hydrolysis activity"/>
    <property type="evidence" value="ECO:0007669"/>
    <property type="project" value="InterPro"/>
</dbReference>
<dbReference type="GO" id="GO:0010043">
    <property type="term" value="P:response to zinc ion"/>
    <property type="evidence" value="ECO:0007669"/>
    <property type="project" value="TreeGrafter"/>
</dbReference>
<dbReference type="FunFam" id="3.40.50.300:FF:000392">
    <property type="entry name" value="Zinc import ATP-binding protein ZnuC"/>
    <property type="match status" value="1"/>
</dbReference>
<dbReference type="Gene3D" id="3.40.50.300">
    <property type="entry name" value="P-loop containing nucleotide triphosphate hydrolases"/>
    <property type="match status" value="1"/>
</dbReference>
<dbReference type="InterPro" id="IPR003593">
    <property type="entry name" value="AAA+_ATPase"/>
</dbReference>
<dbReference type="InterPro" id="IPR003439">
    <property type="entry name" value="ABC_transporter-like_ATP-bd"/>
</dbReference>
<dbReference type="InterPro" id="IPR017871">
    <property type="entry name" value="ABC_transporter-like_CS"/>
</dbReference>
<dbReference type="InterPro" id="IPR050153">
    <property type="entry name" value="Metal_Ion_Import_ABC"/>
</dbReference>
<dbReference type="InterPro" id="IPR027417">
    <property type="entry name" value="P-loop_NTPase"/>
</dbReference>
<dbReference type="NCBIfam" id="NF007090">
    <property type="entry name" value="PRK09544.1"/>
    <property type="match status" value="1"/>
</dbReference>
<dbReference type="PANTHER" id="PTHR42734">
    <property type="entry name" value="METAL TRANSPORT SYSTEM ATP-BINDING PROTEIN TM_0124-RELATED"/>
    <property type="match status" value="1"/>
</dbReference>
<dbReference type="PANTHER" id="PTHR42734:SF9">
    <property type="entry name" value="ZINC IMPORT ATP-BINDING PROTEIN ZNUC"/>
    <property type="match status" value="1"/>
</dbReference>
<dbReference type="Pfam" id="PF00005">
    <property type="entry name" value="ABC_tran"/>
    <property type="match status" value="1"/>
</dbReference>
<dbReference type="SMART" id="SM00382">
    <property type="entry name" value="AAA"/>
    <property type="match status" value="1"/>
</dbReference>
<dbReference type="SUPFAM" id="SSF52540">
    <property type="entry name" value="P-loop containing nucleoside triphosphate hydrolases"/>
    <property type="match status" value="1"/>
</dbReference>
<dbReference type="PROSITE" id="PS00211">
    <property type="entry name" value="ABC_TRANSPORTER_1"/>
    <property type="match status" value="1"/>
</dbReference>
<dbReference type="PROSITE" id="PS50893">
    <property type="entry name" value="ABC_TRANSPORTER_2"/>
    <property type="match status" value="1"/>
</dbReference>
<dbReference type="PROSITE" id="PS51298">
    <property type="entry name" value="ZNUC"/>
    <property type="match status" value="1"/>
</dbReference>
<organism>
    <name type="scientific">Histophilus somni (strain 129Pt)</name>
    <name type="common">Haemophilus somnus</name>
    <dbReference type="NCBI Taxonomy" id="205914"/>
    <lineage>
        <taxon>Bacteria</taxon>
        <taxon>Pseudomonadati</taxon>
        <taxon>Pseudomonadota</taxon>
        <taxon>Gammaproteobacteria</taxon>
        <taxon>Pasteurellales</taxon>
        <taxon>Pasteurellaceae</taxon>
        <taxon>Histophilus</taxon>
    </lineage>
</organism>